<keyword id="KW-0131">Cell cycle</keyword>
<keyword id="KW-0132">Cell division</keyword>
<keyword id="KW-0344">Guanine-nucleotide releasing factor</keyword>
<keyword id="KW-0498">Mitosis</keyword>
<keyword id="KW-0539">Nucleus</keyword>
<keyword id="KW-1185">Reference proteome</keyword>
<keyword id="KW-0677">Repeat</keyword>
<evidence type="ECO:0000256" key="1">
    <source>
        <dbReference type="SAM" id="MobiDB-lite"/>
    </source>
</evidence>
<evidence type="ECO:0000269" key="2">
    <source>
    </source>
</evidence>
<evidence type="ECO:0000269" key="3">
    <source>
    </source>
</evidence>
<evidence type="ECO:0000305" key="4"/>
<gene>
    <name type="primary">pim1</name>
    <name type="synonym">dcd1</name>
    <name type="synonym">ptr2</name>
    <name type="ORF">SPBC557.03c</name>
</gene>
<feature type="chain" id="PRO_0000206636" description="Protein pim1">
    <location>
        <begin position="1"/>
        <end position="539"/>
    </location>
</feature>
<feature type="repeat" description="RCC1 1">
    <location>
        <begin position="70"/>
        <end position="125"/>
    </location>
</feature>
<feature type="repeat" description="RCC1 2">
    <location>
        <begin position="127"/>
        <end position="191"/>
    </location>
</feature>
<feature type="repeat" description="RCC1 3">
    <location>
        <begin position="192"/>
        <end position="243"/>
    </location>
</feature>
<feature type="repeat" description="RCC1 4">
    <location>
        <begin position="244"/>
        <end position="296"/>
    </location>
</feature>
<feature type="repeat" description="RCC1 5">
    <location>
        <begin position="298"/>
        <end position="353"/>
    </location>
</feature>
<feature type="repeat" description="RCC1 6">
    <location>
        <begin position="354"/>
        <end position="417"/>
    </location>
</feature>
<feature type="repeat" description="RCC1 7">
    <location>
        <begin position="419"/>
        <end position="472"/>
    </location>
</feature>
<feature type="region of interest" description="Disordered" evidence="1">
    <location>
        <begin position="1"/>
        <end position="53"/>
    </location>
</feature>
<feature type="region of interest" description="Disordered" evidence="1">
    <location>
        <begin position="478"/>
        <end position="539"/>
    </location>
</feature>
<feature type="compositionally biased region" description="Basic and acidic residues" evidence="1">
    <location>
        <begin position="11"/>
        <end position="33"/>
    </location>
</feature>
<feature type="compositionally biased region" description="Basic residues" evidence="1">
    <location>
        <begin position="34"/>
        <end position="43"/>
    </location>
</feature>
<feature type="compositionally biased region" description="Basic and acidic residues" evidence="1">
    <location>
        <begin position="486"/>
        <end position="504"/>
    </location>
</feature>
<feature type="compositionally biased region" description="Polar residues" evidence="1">
    <location>
        <begin position="514"/>
        <end position="525"/>
    </location>
</feature>
<feature type="sequence conflict" description="In Ref. 1." evidence="4" ref="1">
    <original>S</original>
    <variation>L</variation>
    <location>
        <position position="124"/>
    </location>
</feature>
<feature type="sequence conflict" description="In Ref. 1." evidence="4" ref="1">
    <original>E</original>
    <variation>D</variation>
    <location>
        <position position="526"/>
    </location>
</feature>
<dbReference type="EMBL" id="M73528">
    <property type="status" value="NOT_ANNOTATED_CDS"/>
    <property type="molecule type" value="Genomic_DNA"/>
</dbReference>
<dbReference type="EMBL" id="CU329671">
    <property type="protein sequence ID" value="CAB60670.1"/>
    <property type="molecule type" value="Genomic_DNA"/>
</dbReference>
<dbReference type="PIR" id="B40039">
    <property type="entry name" value="B40039"/>
</dbReference>
<dbReference type="PIR" id="T50368">
    <property type="entry name" value="T50368"/>
</dbReference>
<dbReference type="RefSeq" id="NP_596026.1">
    <property type="nucleotide sequence ID" value="NM_001021935.2"/>
</dbReference>
<dbReference type="SMR" id="P28745"/>
<dbReference type="BioGRID" id="277574">
    <property type="interactions" value="14"/>
</dbReference>
<dbReference type="FunCoup" id="P28745">
    <property type="interactions" value="927"/>
</dbReference>
<dbReference type="STRING" id="284812.P28745"/>
<dbReference type="iPTMnet" id="P28745"/>
<dbReference type="PaxDb" id="4896-SPBC557.03c.1"/>
<dbReference type="EnsemblFungi" id="SPBC557.03c.1">
    <property type="protein sequence ID" value="SPBC557.03c.1:pep"/>
    <property type="gene ID" value="SPBC557.03c"/>
</dbReference>
<dbReference type="PomBase" id="SPBC557.03c">
    <property type="gene designation" value="pim1"/>
</dbReference>
<dbReference type="VEuPathDB" id="FungiDB:SPBC557.03c"/>
<dbReference type="eggNOG" id="KOG1426">
    <property type="taxonomic scope" value="Eukaryota"/>
</dbReference>
<dbReference type="HOGENOM" id="CLU_005210_4_2_1"/>
<dbReference type="InParanoid" id="P28745"/>
<dbReference type="OMA" id="GSFNHAD"/>
<dbReference type="PhylomeDB" id="P28745"/>
<dbReference type="Reactome" id="R-SPO-9615933">
    <property type="pathway name" value="Postmitotic nuclear pore complex (NPC) reformation"/>
</dbReference>
<dbReference type="PRO" id="PR:P28745"/>
<dbReference type="Proteomes" id="UP000002485">
    <property type="component" value="Chromosome II"/>
</dbReference>
<dbReference type="GO" id="GO:0000785">
    <property type="term" value="C:chromatin"/>
    <property type="evidence" value="ECO:0000314"/>
    <property type="project" value="PomBase"/>
</dbReference>
<dbReference type="GO" id="GO:0005737">
    <property type="term" value="C:cytoplasm"/>
    <property type="evidence" value="ECO:0000314"/>
    <property type="project" value="PomBase"/>
</dbReference>
<dbReference type="GO" id="GO:1990023">
    <property type="term" value="C:mitotic spindle midzone"/>
    <property type="evidence" value="ECO:0000314"/>
    <property type="project" value="PomBase"/>
</dbReference>
<dbReference type="GO" id="GO:0005634">
    <property type="term" value="C:nucleus"/>
    <property type="evidence" value="ECO:0007005"/>
    <property type="project" value="PomBase"/>
</dbReference>
<dbReference type="GO" id="GO:0005085">
    <property type="term" value="F:guanyl-nucleotide exchange factor activity"/>
    <property type="evidence" value="ECO:0000316"/>
    <property type="project" value="PomBase"/>
</dbReference>
<dbReference type="GO" id="GO:0051301">
    <property type="term" value="P:cell division"/>
    <property type="evidence" value="ECO:0007669"/>
    <property type="project" value="UniProtKB-KW"/>
</dbReference>
<dbReference type="GO" id="GO:0101024">
    <property type="term" value="P:mitotic nuclear membrane organization"/>
    <property type="evidence" value="ECO:0000315"/>
    <property type="project" value="PomBase"/>
</dbReference>
<dbReference type="GO" id="GO:0046827">
    <property type="term" value="P:positive regulation of protein export from nucleus"/>
    <property type="evidence" value="ECO:0000315"/>
    <property type="project" value="PomBase"/>
</dbReference>
<dbReference type="GO" id="GO:0031291">
    <property type="term" value="P:Ran protein signal transduction"/>
    <property type="evidence" value="ECO:0000316"/>
    <property type="project" value="PomBase"/>
</dbReference>
<dbReference type="GO" id="GO:0007096">
    <property type="term" value="P:regulation of exit from mitosis"/>
    <property type="evidence" value="ECO:0000315"/>
    <property type="project" value="PomBase"/>
</dbReference>
<dbReference type="GO" id="GO:0007346">
    <property type="term" value="P:regulation of mitotic cell cycle"/>
    <property type="evidence" value="ECO:0000318"/>
    <property type="project" value="GO_Central"/>
</dbReference>
<dbReference type="GO" id="GO:1901673">
    <property type="term" value="P:regulation of mitotic spindle assembly"/>
    <property type="evidence" value="ECO:0000315"/>
    <property type="project" value="PomBase"/>
</dbReference>
<dbReference type="GO" id="GO:0032888">
    <property type="term" value="P:regulation of mitotic spindle elongation"/>
    <property type="evidence" value="ECO:0000315"/>
    <property type="project" value="PomBase"/>
</dbReference>
<dbReference type="Gene3D" id="2.130.10.30">
    <property type="entry name" value="Regulator of chromosome condensation 1/beta-lactamase-inhibitor protein II"/>
    <property type="match status" value="1"/>
</dbReference>
<dbReference type="InterPro" id="IPR051553">
    <property type="entry name" value="Ran_GTPase-activating"/>
</dbReference>
<dbReference type="InterPro" id="IPR009091">
    <property type="entry name" value="RCC1/BLIP-II"/>
</dbReference>
<dbReference type="InterPro" id="IPR000408">
    <property type="entry name" value="Reg_chr_condens"/>
</dbReference>
<dbReference type="PANTHER" id="PTHR45982">
    <property type="entry name" value="REGULATOR OF CHROMOSOME CONDENSATION"/>
    <property type="match status" value="1"/>
</dbReference>
<dbReference type="PANTHER" id="PTHR45982:SF1">
    <property type="entry name" value="REGULATOR OF CHROMOSOME CONDENSATION"/>
    <property type="match status" value="1"/>
</dbReference>
<dbReference type="Pfam" id="PF25390">
    <property type="entry name" value="WD40_RLD"/>
    <property type="match status" value="1"/>
</dbReference>
<dbReference type="PRINTS" id="PR00633">
    <property type="entry name" value="RCCNDNSATION"/>
</dbReference>
<dbReference type="SUPFAM" id="SSF50985">
    <property type="entry name" value="RCC1/BLIP-II"/>
    <property type="match status" value="1"/>
</dbReference>
<dbReference type="PROSITE" id="PS00625">
    <property type="entry name" value="RCC1_1"/>
    <property type="match status" value="1"/>
</dbReference>
<dbReference type="PROSITE" id="PS00626">
    <property type="entry name" value="RCC1_2"/>
    <property type="match status" value="3"/>
</dbReference>
<dbReference type="PROSITE" id="PS50012">
    <property type="entry name" value="RCC1_3"/>
    <property type="match status" value="7"/>
</dbReference>
<sequence length="539" mass="58349">MTSNRSTRSSTKREEVSKNGVEKRELDESDVMKNGKKPVKRAKVSSLPKPVRVPGSAKRINKIPELPTERLNVYVFGSGSMNELGMGEEEMDVVYRPRLNPILSTDKVGVVDLAVGGMHSAALSHDGRVYTWGVNDDYALGRLTKDQKDENGDKVDNDLLEGTPSKVEGALSHLRVTKVICSDNLTAAITDNGCCFTWGTFRCSDGVLGYSDSQKRTAEPTQMRLPEICQLATGTDHIIALTTTGKVYTWGNGQQFQLGRRMLERRRLQGLTPQPLALKNIISVGAGSYHSFAIDNKGRVYAWGLNITRQCGIEVEDEEEGAVITKPTLVDALEGYNVKSITGGEHHTLALLEDGRVLAWGRDDRHQLGIPDNALPETVVKDEKGNNYYLSTPTIIPGLTNVIQVVCGTHHNLAVTSDGKVYSWGSAENYEVGQGDNDEDVAVPTLVRSKAIKEVAIRVAGAGGQFSIIAGIPNASEEPVANGIKSEPENEKKLKTEETSKTDDSPVTDAKPDVTSNGEPSTATSESKDSVLEPSSTTA</sequence>
<organism>
    <name type="scientific">Schizosaccharomyces pombe (strain 972 / ATCC 24843)</name>
    <name type="common">Fission yeast</name>
    <dbReference type="NCBI Taxonomy" id="284812"/>
    <lineage>
        <taxon>Eukaryota</taxon>
        <taxon>Fungi</taxon>
        <taxon>Dikarya</taxon>
        <taxon>Ascomycota</taxon>
        <taxon>Taphrinomycotina</taxon>
        <taxon>Schizosaccharomycetes</taxon>
        <taxon>Schizosaccharomycetales</taxon>
        <taxon>Schizosaccharomycetaceae</taxon>
        <taxon>Schizosaccharomyces</taxon>
    </lineage>
</organism>
<reference key="1">
    <citation type="journal article" date="1991" name="Cell">
        <title>Premature initiation of mitosis in yeast lacking RCC1 or an interacting GTPase.</title>
        <authorList>
            <person name="Matsumoto T."/>
            <person name="Beach D.H."/>
        </authorList>
    </citation>
    <scope>NUCLEOTIDE SEQUENCE [GENOMIC DNA]</scope>
</reference>
<reference key="2">
    <citation type="journal article" date="2002" name="Nature">
        <title>The genome sequence of Schizosaccharomyces pombe.</title>
        <authorList>
            <person name="Wood V."/>
            <person name="Gwilliam R."/>
            <person name="Rajandream M.A."/>
            <person name="Lyne M.H."/>
            <person name="Lyne R."/>
            <person name="Stewart A."/>
            <person name="Sgouros J.G."/>
            <person name="Peat N."/>
            <person name="Hayles J."/>
            <person name="Baker S.G."/>
            <person name="Basham D."/>
            <person name="Bowman S."/>
            <person name="Brooks K."/>
            <person name="Brown D."/>
            <person name="Brown S."/>
            <person name="Chillingworth T."/>
            <person name="Churcher C.M."/>
            <person name="Collins M."/>
            <person name="Connor R."/>
            <person name="Cronin A."/>
            <person name="Davis P."/>
            <person name="Feltwell T."/>
            <person name="Fraser A."/>
            <person name="Gentles S."/>
            <person name="Goble A."/>
            <person name="Hamlin N."/>
            <person name="Harris D.E."/>
            <person name="Hidalgo J."/>
            <person name="Hodgson G."/>
            <person name="Holroyd S."/>
            <person name="Hornsby T."/>
            <person name="Howarth S."/>
            <person name="Huckle E.J."/>
            <person name="Hunt S."/>
            <person name="Jagels K."/>
            <person name="James K.D."/>
            <person name="Jones L."/>
            <person name="Jones M."/>
            <person name="Leather S."/>
            <person name="McDonald S."/>
            <person name="McLean J."/>
            <person name="Mooney P."/>
            <person name="Moule S."/>
            <person name="Mungall K.L."/>
            <person name="Murphy L.D."/>
            <person name="Niblett D."/>
            <person name="Odell C."/>
            <person name="Oliver K."/>
            <person name="O'Neil S."/>
            <person name="Pearson D."/>
            <person name="Quail M.A."/>
            <person name="Rabbinowitsch E."/>
            <person name="Rutherford K.M."/>
            <person name="Rutter S."/>
            <person name="Saunders D."/>
            <person name="Seeger K."/>
            <person name="Sharp S."/>
            <person name="Skelton J."/>
            <person name="Simmonds M.N."/>
            <person name="Squares R."/>
            <person name="Squares S."/>
            <person name="Stevens K."/>
            <person name="Taylor K."/>
            <person name="Taylor R.G."/>
            <person name="Tivey A."/>
            <person name="Walsh S.V."/>
            <person name="Warren T."/>
            <person name="Whitehead S."/>
            <person name="Woodward J.R."/>
            <person name="Volckaert G."/>
            <person name="Aert R."/>
            <person name="Robben J."/>
            <person name="Grymonprez B."/>
            <person name="Weltjens I."/>
            <person name="Vanstreels E."/>
            <person name="Rieger M."/>
            <person name="Schaefer M."/>
            <person name="Mueller-Auer S."/>
            <person name="Gabel C."/>
            <person name="Fuchs M."/>
            <person name="Duesterhoeft A."/>
            <person name="Fritzc C."/>
            <person name="Holzer E."/>
            <person name="Moestl D."/>
            <person name="Hilbert H."/>
            <person name="Borzym K."/>
            <person name="Langer I."/>
            <person name="Beck A."/>
            <person name="Lehrach H."/>
            <person name="Reinhardt R."/>
            <person name="Pohl T.M."/>
            <person name="Eger P."/>
            <person name="Zimmermann W."/>
            <person name="Wedler H."/>
            <person name="Wambutt R."/>
            <person name="Purnelle B."/>
            <person name="Goffeau A."/>
            <person name="Cadieu E."/>
            <person name="Dreano S."/>
            <person name="Gloux S."/>
            <person name="Lelaure V."/>
            <person name="Mottier S."/>
            <person name="Galibert F."/>
            <person name="Aves S.J."/>
            <person name="Xiang Z."/>
            <person name="Hunt C."/>
            <person name="Moore K."/>
            <person name="Hurst S.M."/>
            <person name="Lucas M."/>
            <person name="Rochet M."/>
            <person name="Gaillardin C."/>
            <person name="Tallada V.A."/>
            <person name="Garzon A."/>
            <person name="Thode G."/>
            <person name="Daga R.R."/>
            <person name="Cruzado L."/>
            <person name="Jimenez J."/>
            <person name="Sanchez M."/>
            <person name="del Rey F."/>
            <person name="Benito J."/>
            <person name="Dominguez A."/>
            <person name="Revuelta J.L."/>
            <person name="Moreno S."/>
            <person name="Armstrong J."/>
            <person name="Forsburg S.L."/>
            <person name="Cerutti L."/>
            <person name="Lowe T."/>
            <person name="McCombie W.R."/>
            <person name="Paulsen I."/>
            <person name="Potashkin J."/>
            <person name="Shpakovski G.V."/>
            <person name="Ussery D."/>
            <person name="Barrell B.G."/>
            <person name="Nurse P."/>
        </authorList>
    </citation>
    <scope>NUCLEOTIDE SEQUENCE [LARGE SCALE GENOMIC DNA]</scope>
    <source>
        <strain>972 / ATCC 24843</strain>
    </source>
</reference>
<reference key="3">
    <citation type="journal article" date="1996" name="EMBO J.">
        <title>Dis3, implicated in mitotic control, binds directly to Ran and enhances the GEF activity of RCC1.</title>
        <authorList>
            <person name="Noguchi E."/>
            <person name="Hayashi N."/>
            <person name="Azuma Y."/>
            <person name="Seki T."/>
            <person name="Nakamura M."/>
            <person name="Nakashima N."/>
            <person name="Yanagida M."/>
            <person name="He X."/>
            <person name="Mueller U."/>
            <person name="Sazer S."/>
            <person name="Nishimoto T."/>
        </authorList>
    </citation>
    <scope>INTERACTION WITH DIS3 AND SPI1</scope>
</reference>
<reference key="4">
    <citation type="journal article" date="2002" name="J. Cell Sci.">
        <title>An evolutionarily conserved fission yeast protein, Ned1, implicated in normal nuclear morphology and chromosome stability, interacts with Dis3, Pim1/RCC1 and an essential nucleoporin.</title>
        <authorList>
            <person name="Tange Y."/>
            <person name="Hirata A."/>
            <person name="Niwa O."/>
        </authorList>
    </citation>
    <scope>INTERACTION WITH NED1</scope>
</reference>
<comment type="function">
    <text>Promotes the exchange of Ran(spi1)-bound GDP by GTP. Involved in the control of mitosis. Regulates a variety of nuclear events, including mitotic check-point, chromosome decondensation and mRNA processing/transport.</text>
</comment>
<comment type="subunit">
    <text evidence="2 3">Oligomer of dis3, pim1 and spi1. Interacts with ned1.</text>
</comment>
<comment type="subcellular location">
    <subcellularLocation>
        <location>Nucleus</location>
    </subcellularLocation>
</comment>
<protein>
    <recommendedName>
        <fullName>Protein pim1</fullName>
    </recommendedName>
    <alternativeName>
        <fullName>Poly(A)+ RNA transport protein 2</fullName>
    </alternativeName>
</protein>
<name>RCC1_SCHPO</name>
<accession>P28745</accession>
<accession>Q9USS3</accession>
<proteinExistence type="evidence at protein level"/>